<feature type="chain" id="PRO_0000051949" description="Cytochrome P450 18a1">
    <location>
        <begin position="1"/>
        <end position="538"/>
    </location>
</feature>
<feature type="transmembrane region" description="Helical" evidence="2">
    <location>
        <begin position="24"/>
        <end position="44"/>
    </location>
</feature>
<feature type="binding site" description="axial binding residue" evidence="1">
    <location>
        <position position="466"/>
    </location>
    <ligand>
        <name>heme</name>
        <dbReference type="ChEBI" id="CHEBI:30413"/>
    </ligand>
    <ligandPart>
        <name>Fe</name>
        <dbReference type="ChEBI" id="CHEBI:18248"/>
    </ligandPart>
</feature>
<feature type="sequence variant" description="In strain: CN15X." evidence="3">
    <original>H</original>
    <variation>Y</variation>
    <location>
        <position position="530"/>
    </location>
</feature>
<feature type="sequence conflict" description="In Ref. 1; AAB69750." evidence="5" ref="1">
    <original>Q</original>
    <variation>E</variation>
    <location>
        <position position="19"/>
    </location>
</feature>
<feature type="sequence conflict" description="In Ref. 5; AAB28524." evidence="5" ref="5">
    <original>LF</original>
    <variation>PV</variation>
    <location>
        <begin position="478"/>
        <end position="479"/>
    </location>
</feature>
<feature type="sequence conflict" description="In Ref. 1; AAB69750." evidence="5" ref="1">
    <original>R</original>
    <variation>S</variation>
    <location>
        <position position="520"/>
    </location>
</feature>
<sequence>MLADSYLIKFVLRQLQVQQDGDAQHLLMVFLGLLALVTLLQWLVRNYRELRKLPPGPWGLPVIGYLLFMGSEKHTRFMELAKQYGSLFSTRLGSQLTVVMSDYKMIRECFRREEFTGRPDTPFMQTLNGYGIINSTGKLWKDQRRFLHDKLRQFGMTYMGNGKQQMQKRIMTEVHEFIGHLHASDGQPVDMSPVISVAVSNVICSLMMSTRFSIDDPKFRRFNFLIEEGMRLFGEIHTVDYIPTMQCFPSISTAKNKIAQNRAEMQRFYQDVIDDHKRSFDPNNIRDLVDFYLCEIEKAKAEGTDAELFDGKNHEEQLVQVIIDLFSAGMETIKTTLLWINVFMLRNPKEMRRVQDELDQVVGRHRLPTIEDLQYLPITESTILESMRRSSIVPLATTHSPTRDVELNGYTIPAGSHVIPLINSVHMDPNLWEKPEEFRPSRFIDTEGKVRKPEYFIPFGVGRRMCLGDVLARMELFLFFASFMHCFDIALPEGQPLPSLKGNVGATITPESFKVCLKRRPLGPTAADPHHMRNVGAN</sequence>
<reference key="1">
    <citation type="journal article" date="1997" name="Mol. Cell. Endocrinol.">
        <title>Sequence and developmental expression of Cyp18, a member of a new cytochrome P450 family from Drosophila.</title>
        <authorList>
            <person name="Bassett M.H."/>
            <person name="McCarthy J.L."/>
            <person name="Waterman M.R."/>
            <person name="Sliter T.J."/>
        </authorList>
    </citation>
    <scope>NUCLEOTIDE SEQUENCE [MRNA]</scope>
    <scope>FUNCTION</scope>
    <scope>INDUCTION</scope>
    <scope>TISSUE SPECIFICITY</scope>
    <source>
        <tissue>Larva</tissue>
    </source>
</reference>
<reference key="2">
    <citation type="journal article" date="2007" name="Mol. Biol. Evol.">
        <title>Genome scans of variation and adaptive change: extended analysis of a candidate locus close to the phantom gene region in Drosophila melanogaster.</title>
        <authorList>
            <person name="Orengo D.J."/>
            <person name="Aguade M."/>
        </authorList>
    </citation>
    <scope>NUCLEOTIDE SEQUENCE [GENOMIC DNA]</scope>
    <scope>VARIANT TYR-530</scope>
    <source>
        <strain>CN10X</strain>
        <strain>CN11X</strain>
        <strain>CN13X</strain>
        <strain>CN15X</strain>
        <strain>CN16X</strain>
        <strain>CN17X</strain>
        <strain>CN19X</strain>
        <strain>CN21X</strain>
        <strain>CN22BX</strain>
        <strain>CN3X</strain>
        <strain>CN7X</strain>
    </source>
</reference>
<reference key="3">
    <citation type="journal article" date="2000" name="Science">
        <title>The genome sequence of Drosophila melanogaster.</title>
        <authorList>
            <person name="Adams M.D."/>
            <person name="Celniker S.E."/>
            <person name="Holt R.A."/>
            <person name="Evans C.A."/>
            <person name="Gocayne J.D."/>
            <person name="Amanatides P.G."/>
            <person name="Scherer S.E."/>
            <person name="Li P.W."/>
            <person name="Hoskins R.A."/>
            <person name="Galle R.F."/>
            <person name="George R.A."/>
            <person name="Lewis S.E."/>
            <person name="Richards S."/>
            <person name="Ashburner M."/>
            <person name="Henderson S.N."/>
            <person name="Sutton G.G."/>
            <person name="Wortman J.R."/>
            <person name="Yandell M.D."/>
            <person name="Zhang Q."/>
            <person name="Chen L.X."/>
            <person name="Brandon R.C."/>
            <person name="Rogers Y.-H.C."/>
            <person name="Blazej R.G."/>
            <person name="Champe M."/>
            <person name="Pfeiffer B.D."/>
            <person name="Wan K.H."/>
            <person name="Doyle C."/>
            <person name="Baxter E.G."/>
            <person name="Helt G."/>
            <person name="Nelson C.R."/>
            <person name="Miklos G.L.G."/>
            <person name="Abril J.F."/>
            <person name="Agbayani A."/>
            <person name="An H.-J."/>
            <person name="Andrews-Pfannkoch C."/>
            <person name="Baldwin D."/>
            <person name="Ballew R.M."/>
            <person name="Basu A."/>
            <person name="Baxendale J."/>
            <person name="Bayraktaroglu L."/>
            <person name="Beasley E.M."/>
            <person name="Beeson K.Y."/>
            <person name="Benos P.V."/>
            <person name="Berman B.P."/>
            <person name="Bhandari D."/>
            <person name="Bolshakov S."/>
            <person name="Borkova D."/>
            <person name="Botchan M.R."/>
            <person name="Bouck J."/>
            <person name="Brokstein P."/>
            <person name="Brottier P."/>
            <person name="Burtis K.C."/>
            <person name="Busam D.A."/>
            <person name="Butler H."/>
            <person name="Cadieu E."/>
            <person name="Center A."/>
            <person name="Chandra I."/>
            <person name="Cherry J.M."/>
            <person name="Cawley S."/>
            <person name="Dahlke C."/>
            <person name="Davenport L.B."/>
            <person name="Davies P."/>
            <person name="de Pablos B."/>
            <person name="Delcher A."/>
            <person name="Deng Z."/>
            <person name="Mays A.D."/>
            <person name="Dew I."/>
            <person name="Dietz S.M."/>
            <person name="Dodson K."/>
            <person name="Doup L.E."/>
            <person name="Downes M."/>
            <person name="Dugan-Rocha S."/>
            <person name="Dunkov B.C."/>
            <person name="Dunn P."/>
            <person name="Durbin K.J."/>
            <person name="Evangelista C.C."/>
            <person name="Ferraz C."/>
            <person name="Ferriera S."/>
            <person name="Fleischmann W."/>
            <person name="Fosler C."/>
            <person name="Gabrielian A.E."/>
            <person name="Garg N.S."/>
            <person name="Gelbart W.M."/>
            <person name="Glasser K."/>
            <person name="Glodek A."/>
            <person name="Gong F."/>
            <person name="Gorrell J.H."/>
            <person name="Gu Z."/>
            <person name="Guan P."/>
            <person name="Harris M."/>
            <person name="Harris N.L."/>
            <person name="Harvey D.A."/>
            <person name="Heiman T.J."/>
            <person name="Hernandez J.R."/>
            <person name="Houck J."/>
            <person name="Hostin D."/>
            <person name="Houston K.A."/>
            <person name="Howland T.J."/>
            <person name="Wei M.-H."/>
            <person name="Ibegwam C."/>
            <person name="Jalali M."/>
            <person name="Kalush F."/>
            <person name="Karpen G.H."/>
            <person name="Ke Z."/>
            <person name="Kennison J.A."/>
            <person name="Ketchum K.A."/>
            <person name="Kimmel B.E."/>
            <person name="Kodira C.D."/>
            <person name="Kraft C.L."/>
            <person name="Kravitz S."/>
            <person name="Kulp D."/>
            <person name="Lai Z."/>
            <person name="Lasko P."/>
            <person name="Lei Y."/>
            <person name="Levitsky A.A."/>
            <person name="Li J.H."/>
            <person name="Li Z."/>
            <person name="Liang Y."/>
            <person name="Lin X."/>
            <person name="Liu X."/>
            <person name="Mattei B."/>
            <person name="McIntosh T.C."/>
            <person name="McLeod M.P."/>
            <person name="McPherson D."/>
            <person name="Merkulov G."/>
            <person name="Milshina N.V."/>
            <person name="Mobarry C."/>
            <person name="Morris J."/>
            <person name="Moshrefi A."/>
            <person name="Mount S.M."/>
            <person name="Moy M."/>
            <person name="Murphy B."/>
            <person name="Murphy L."/>
            <person name="Muzny D.M."/>
            <person name="Nelson D.L."/>
            <person name="Nelson D.R."/>
            <person name="Nelson K.A."/>
            <person name="Nixon K."/>
            <person name="Nusskern D.R."/>
            <person name="Pacleb J.M."/>
            <person name="Palazzolo M."/>
            <person name="Pittman G.S."/>
            <person name="Pan S."/>
            <person name="Pollard J."/>
            <person name="Puri V."/>
            <person name="Reese M.G."/>
            <person name="Reinert K."/>
            <person name="Remington K."/>
            <person name="Saunders R.D.C."/>
            <person name="Scheeler F."/>
            <person name="Shen H."/>
            <person name="Shue B.C."/>
            <person name="Siden-Kiamos I."/>
            <person name="Simpson M."/>
            <person name="Skupski M.P."/>
            <person name="Smith T.J."/>
            <person name="Spier E."/>
            <person name="Spradling A.C."/>
            <person name="Stapleton M."/>
            <person name="Strong R."/>
            <person name="Sun E."/>
            <person name="Svirskas R."/>
            <person name="Tector C."/>
            <person name="Turner R."/>
            <person name="Venter E."/>
            <person name="Wang A.H."/>
            <person name="Wang X."/>
            <person name="Wang Z.-Y."/>
            <person name="Wassarman D.A."/>
            <person name="Weinstock G.M."/>
            <person name="Weissenbach J."/>
            <person name="Williams S.M."/>
            <person name="Woodage T."/>
            <person name="Worley K.C."/>
            <person name="Wu D."/>
            <person name="Yang S."/>
            <person name="Yao Q.A."/>
            <person name="Ye J."/>
            <person name="Yeh R.-F."/>
            <person name="Zaveri J.S."/>
            <person name="Zhan M."/>
            <person name="Zhang G."/>
            <person name="Zhao Q."/>
            <person name="Zheng L."/>
            <person name="Zheng X.H."/>
            <person name="Zhong F.N."/>
            <person name="Zhong W."/>
            <person name="Zhou X."/>
            <person name="Zhu S.C."/>
            <person name="Zhu X."/>
            <person name="Smith H.O."/>
            <person name="Gibbs R.A."/>
            <person name="Myers E.W."/>
            <person name="Rubin G.M."/>
            <person name="Venter J.C."/>
        </authorList>
    </citation>
    <scope>NUCLEOTIDE SEQUENCE [LARGE SCALE GENOMIC DNA]</scope>
    <source>
        <strain>Berkeley</strain>
    </source>
</reference>
<reference key="4">
    <citation type="journal article" date="2002" name="Genome Biol.">
        <title>Annotation of the Drosophila melanogaster euchromatic genome: a systematic review.</title>
        <authorList>
            <person name="Misra S."/>
            <person name="Crosby M.A."/>
            <person name="Mungall C.J."/>
            <person name="Matthews B.B."/>
            <person name="Campbell K.S."/>
            <person name="Hradecky P."/>
            <person name="Huang Y."/>
            <person name="Kaminker J.S."/>
            <person name="Millburn G.H."/>
            <person name="Prochnik S.E."/>
            <person name="Smith C.D."/>
            <person name="Tupy J.L."/>
            <person name="Whitfield E.J."/>
            <person name="Bayraktaroglu L."/>
            <person name="Berman B.P."/>
            <person name="Bettencourt B.R."/>
            <person name="Celniker S.E."/>
            <person name="de Grey A.D.N.J."/>
            <person name="Drysdale R.A."/>
            <person name="Harris N.L."/>
            <person name="Richter J."/>
            <person name="Russo S."/>
            <person name="Schroeder A.J."/>
            <person name="Shu S.Q."/>
            <person name="Stapleton M."/>
            <person name="Yamada C."/>
            <person name="Ashburner M."/>
            <person name="Gelbart W.M."/>
            <person name="Rubin G.M."/>
            <person name="Lewis S.E."/>
        </authorList>
    </citation>
    <scope>GENOME REANNOTATION</scope>
    <source>
        <strain>Berkeley</strain>
    </source>
</reference>
<reference key="5">
    <citation type="journal article" date="1993" name="Mol. Cell. Biol.">
        <title>Isolation and characterization of fifteen ecdysone-inducible Drosophila genes reveal unexpected complexities in ecdysone regulation.</title>
        <authorList>
            <person name="Hurban P."/>
            <person name="Thummel C.S."/>
        </authorList>
    </citation>
    <scope>NUCLEOTIDE SEQUENCE [MRNA] OF 459-479</scope>
    <source>
        <strain>Canton-S</strain>
    </source>
</reference>
<dbReference type="EC" id="1.14.-.-"/>
<dbReference type="EMBL" id="U44753">
    <property type="protein sequence ID" value="AAB69750.1"/>
    <property type="molecule type" value="mRNA"/>
</dbReference>
<dbReference type="EMBL" id="AM411848">
    <property type="protein sequence ID" value="CAL69930.1"/>
    <property type="molecule type" value="Genomic_DNA"/>
</dbReference>
<dbReference type="EMBL" id="AM411849">
    <property type="protein sequence ID" value="CAL69932.1"/>
    <property type="molecule type" value="Genomic_DNA"/>
</dbReference>
<dbReference type="EMBL" id="AM411850">
    <property type="protein sequence ID" value="CAL69934.1"/>
    <property type="molecule type" value="Genomic_DNA"/>
</dbReference>
<dbReference type="EMBL" id="AM411851">
    <property type="protein sequence ID" value="CAL69936.1"/>
    <property type="molecule type" value="Genomic_DNA"/>
</dbReference>
<dbReference type="EMBL" id="AM411852">
    <property type="protein sequence ID" value="CAL69938.1"/>
    <property type="molecule type" value="Genomic_DNA"/>
</dbReference>
<dbReference type="EMBL" id="AM411853">
    <property type="protein sequence ID" value="CAL69940.1"/>
    <property type="molecule type" value="Genomic_DNA"/>
</dbReference>
<dbReference type="EMBL" id="AM411854">
    <property type="protein sequence ID" value="CAL69942.1"/>
    <property type="molecule type" value="Genomic_DNA"/>
</dbReference>
<dbReference type="EMBL" id="AM411855">
    <property type="protein sequence ID" value="CAL69944.1"/>
    <property type="molecule type" value="Genomic_DNA"/>
</dbReference>
<dbReference type="EMBL" id="AM411856">
    <property type="protein sequence ID" value="CAL69946.1"/>
    <property type="molecule type" value="Genomic_DNA"/>
</dbReference>
<dbReference type="EMBL" id="AM411857">
    <property type="protein sequence ID" value="CAL69948.1"/>
    <property type="molecule type" value="Genomic_DNA"/>
</dbReference>
<dbReference type="EMBL" id="AM411858">
    <property type="protein sequence ID" value="CAL69950.1"/>
    <property type="molecule type" value="Genomic_DNA"/>
</dbReference>
<dbReference type="EMBL" id="AM411859">
    <property type="protein sequence ID" value="CAL69952.1"/>
    <property type="molecule type" value="Genomic_DNA"/>
</dbReference>
<dbReference type="EMBL" id="AM411860">
    <property type="protein sequence ID" value="CAL69954.1"/>
    <property type="molecule type" value="Genomic_DNA"/>
</dbReference>
<dbReference type="EMBL" id="AE014298">
    <property type="protein sequence ID" value="AAN09473.1"/>
    <property type="molecule type" value="Genomic_DNA"/>
</dbReference>
<dbReference type="EMBL" id="S66112">
    <property type="protein sequence ID" value="AAB28524.1"/>
    <property type="molecule type" value="mRNA"/>
</dbReference>
<dbReference type="RefSeq" id="NP_523403.2">
    <property type="nucleotide sequence ID" value="NM_078679.3"/>
</dbReference>
<dbReference type="RefSeq" id="NP_728191.1">
    <property type="nucleotide sequence ID" value="NM_167628.2"/>
</dbReference>
<dbReference type="SMR" id="Q95078"/>
<dbReference type="BioGRID" id="59170">
    <property type="interactions" value="2"/>
</dbReference>
<dbReference type="FunCoup" id="Q95078">
    <property type="interactions" value="160"/>
</dbReference>
<dbReference type="STRING" id="7227.FBpp0074381"/>
<dbReference type="GlyGen" id="Q95078">
    <property type="glycosylation" value="1 site"/>
</dbReference>
<dbReference type="PaxDb" id="7227-FBpp0074381"/>
<dbReference type="EnsemblMetazoa" id="FBtr0074609">
    <property type="protein sequence ID" value="FBpp0074380"/>
    <property type="gene ID" value="FBgn0010383"/>
</dbReference>
<dbReference type="EnsemblMetazoa" id="FBtr0074610">
    <property type="protein sequence ID" value="FBpp0074381"/>
    <property type="gene ID" value="FBgn0010383"/>
</dbReference>
<dbReference type="GeneID" id="32858"/>
<dbReference type="KEGG" id="dme:Dmel_CG6816"/>
<dbReference type="AGR" id="FB:FBgn0010383"/>
<dbReference type="CTD" id="32858"/>
<dbReference type="FlyBase" id="FBgn0010383">
    <property type="gene designation" value="Cyp18a1"/>
</dbReference>
<dbReference type="VEuPathDB" id="VectorBase:FBgn0010383"/>
<dbReference type="eggNOG" id="KOG0156">
    <property type="taxonomic scope" value="Eukaryota"/>
</dbReference>
<dbReference type="GeneTree" id="ENSGT00940000167749"/>
<dbReference type="HOGENOM" id="CLU_001570_22_0_1"/>
<dbReference type="InParanoid" id="Q95078"/>
<dbReference type="OMA" id="ICGITMS"/>
<dbReference type="OrthoDB" id="1055148at2759"/>
<dbReference type="PhylomeDB" id="Q95078"/>
<dbReference type="BioCyc" id="MetaCyc:MONOMER-18164"/>
<dbReference type="Reactome" id="R-DME-211935">
    <property type="pathway name" value="Fatty acids"/>
</dbReference>
<dbReference type="Reactome" id="R-DME-211945">
    <property type="pathway name" value="Phase I - Functionalization of compounds"/>
</dbReference>
<dbReference type="Reactome" id="R-DME-211958">
    <property type="pathway name" value="Miscellaneous substrates"/>
</dbReference>
<dbReference type="Reactome" id="R-DME-211981">
    <property type="pathway name" value="Xenobiotics"/>
</dbReference>
<dbReference type="Reactome" id="R-DME-211999">
    <property type="pathway name" value="CYP2E1 reactions"/>
</dbReference>
<dbReference type="Reactome" id="R-DME-2142670">
    <property type="pathway name" value="Synthesis of epoxy (EET) and dihydroxyeicosatrienoic acids (DHET)"/>
</dbReference>
<dbReference type="Reactome" id="R-DME-2142816">
    <property type="pathway name" value="Synthesis of (16-20)-hydroxyeicosatetraenoic acids (HETE)"/>
</dbReference>
<dbReference type="Reactome" id="R-DME-5423646">
    <property type="pathway name" value="Aflatoxin activation and detoxification"/>
</dbReference>
<dbReference type="Reactome" id="R-DME-9027307">
    <property type="pathway name" value="Biosynthesis of maresin-like SPMs"/>
</dbReference>
<dbReference type="Reactome" id="R-DME-9749641">
    <property type="pathway name" value="Aspirin ADME"/>
</dbReference>
<dbReference type="Reactome" id="R-DME-9753281">
    <property type="pathway name" value="Paracetamol ADME"/>
</dbReference>
<dbReference type="BioGRID-ORCS" id="32858">
    <property type="hits" value="0 hits in 3 CRISPR screens"/>
</dbReference>
<dbReference type="GenomeRNAi" id="32858"/>
<dbReference type="PRO" id="PR:Q95078"/>
<dbReference type="Proteomes" id="UP000000803">
    <property type="component" value="Chromosome X"/>
</dbReference>
<dbReference type="Bgee" id="FBgn0010383">
    <property type="expression patterns" value="Expressed in adult tracheocyte (Drosophila) in insect leg and 125 other cell types or tissues"/>
</dbReference>
<dbReference type="GO" id="GO:0005737">
    <property type="term" value="C:cytoplasm"/>
    <property type="evidence" value="ECO:0000318"/>
    <property type="project" value="GO_Central"/>
</dbReference>
<dbReference type="GO" id="GO:0005789">
    <property type="term" value="C:endoplasmic reticulum membrane"/>
    <property type="evidence" value="ECO:0007669"/>
    <property type="project" value="UniProtKB-SubCell"/>
</dbReference>
<dbReference type="GO" id="GO:0043231">
    <property type="term" value="C:intracellular membrane-bounded organelle"/>
    <property type="evidence" value="ECO:0000318"/>
    <property type="project" value="GO_Central"/>
</dbReference>
<dbReference type="GO" id="GO:0020037">
    <property type="term" value="F:heme binding"/>
    <property type="evidence" value="ECO:0000318"/>
    <property type="project" value="GO_Central"/>
</dbReference>
<dbReference type="GO" id="GO:0005506">
    <property type="term" value="F:iron ion binding"/>
    <property type="evidence" value="ECO:0007669"/>
    <property type="project" value="InterPro"/>
</dbReference>
<dbReference type="GO" id="GO:0016712">
    <property type="term" value="F:oxidoreductase activity, acting on paired donors, with incorporation or reduction of molecular oxygen, reduced flavin or flavoprotein as one donor, and incorporation of one atom of oxygen"/>
    <property type="evidence" value="ECO:0000318"/>
    <property type="project" value="GO_Central"/>
</dbReference>
<dbReference type="GO" id="GO:0008395">
    <property type="term" value="F:steroid hydroxylase activity"/>
    <property type="evidence" value="ECO:0000314"/>
    <property type="project" value="FlyBase"/>
</dbReference>
<dbReference type="GO" id="GO:0007304">
    <property type="term" value="P:chorion-containing eggshell formation"/>
    <property type="evidence" value="ECO:0000315"/>
    <property type="project" value="FlyBase"/>
</dbReference>
<dbReference type="GO" id="GO:0046344">
    <property type="term" value="P:ecdysteroid catabolic process"/>
    <property type="evidence" value="ECO:0000315"/>
    <property type="project" value="FlyBase"/>
</dbReference>
<dbReference type="GO" id="GO:0007480">
    <property type="term" value="P:imaginal disc-derived leg morphogenesis"/>
    <property type="evidence" value="ECO:0000315"/>
    <property type="project" value="FlyBase"/>
</dbReference>
<dbReference type="GO" id="GO:0007552">
    <property type="term" value="P:metamorphosis"/>
    <property type="evidence" value="ECO:0000315"/>
    <property type="project" value="FlyBase"/>
</dbReference>
<dbReference type="GO" id="GO:0006082">
    <property type="term" value="P:organic acid metabolic process"/>
    <property type="evidence" value="ECO:0000318"/>
    <property type="project" value="GO_Central"/>
</dbReference>
<dbReference type="GO" id="GO:0035210">
    <property type="term" value="P:prepupal development"/>
    <property type="evidence" value="ECO:0000315"/>
    <property type="project" value="FlyBase"/>
</dbReference>
<dbReference type="GO" id="GO:0035074">
    <property type="term" value="P:pupation"/>
    <property type="evidence" value="ECO:0000315"/>
    <property type="project" value="FlyBase"/>
</dbReference>
<dbReference type="GO" id="GO:0006805">
    <property type="term" value="P:xenobiotic metabolic process"/>
    <property type="evidence" value="ECO:0000318"/>
    <property type="project" value="GO_Central"/>
</dbReference>
<dbReference type="CDD" id="cd20652">
    <property type="entry name" value="CYP306A1-like"/>
    <property type="match status" value="1"/>
</dbReference>
<dbReference type="FunFam" id="1.10.630.10:FF:000070">
    <property type="entry name" value="cytochrome P450 18a1"/>
    <property type="match status" value="1"/>
</dbReference>
<dbReference type="Gene3D" id="1.10.630.10">
    <property type="entry name" value="Cytochrome P450"/>
    <property type="match status" value="1"/>
</dbReference>
<dbReference type="InterPro" id="IPR001128">
    <property type="entry name" value="Cyt_P450"/>
</dbReference>
<dbReference type="InterPro" id="IPR017972">
    <property type="entry name" value="Cyt_P450_CS"/>
</dbReference>
<dbReference type="InterPro" id="IPR002401">
    <property type="entry name" value="Cyt_P450_E_grp-I"/>
</dbReference>
<dbReference type="InterPro" id="IPR036396">
    <property type="entry name" value="Cyt_P450_sf"/>
</dbReference>
<dbReference type="InterPro" id="IPR050182">
    <property type="entry name" value="Cytochrome_P450_fam2"/>
</dbReference>
<dbReference type="PANTHER" id="PTHR24300:SF413">
    <property type="entry name" value="CYTOCHROME P450 18A1"/>
    <property type="match status" value="1"/>
</dbReference>
<dbReference type="PANTHER" id="PTHR24300">
    <property type="entry name" value="CYTOCHROME P450 508A4-RELATED"/>
    <property type="match status" value="1"/>
</dbReference>
<dbReference type="Pfam" id="PF00067">
    <property type="entry name" value="p450"/>
    <property type="match status" value="1"/>
</dbReference>
<dbReference type="PRINTS" id="PR00463">
    <property type="entry name" value="EP450I"/>
</dbReference>
<dbReference type="PRINTS" id="PR00385">
    <property type="entry name" value="P450"/>
</dbReference>
<dbReference type="SUPFAM" id="SSF48264">
    <property type="entry name" value="Cytochrome P450"/>
    <property type="match status" value="1"/>
</dbReference>
<dbReference type="PROSITE" id="PS00086">
    <property type="entry name" value="CYTOCHROME_P450"/>
    <property type="match status" value="1"/>
</dbReference>
<organism>
    <name type="scientific">Drosophila melanogaster</name>
    <name type="common">Fruit fly</name>
    <dbReference type="NCBI Taxonomy" id="7227"/>
    <lineage>
        <taxon>Eukaryota</taxon>
        <taxon>Metazoa</taxon>
        <taxon>Ecdysozoa</taxon>
        <taxon>Arthropoda</taxon>
        <taxon>Hexapoda</taxon>
        <taxon>Insecta</taxon>
        <taxon>Pterygota</taxon>
        <taxon>Neoptera</taxon>
        <taxon>Endopterygota</taxon>
        <taxon>Diptera</taxon>
        <taxon>Brachycera</taxon>
        <taxon>Muscomorpha</taxon>
        <taxon>Ephydroidea</taxon>
        <taxon>Drosophilidae</taxon>
        <taxon>Drosophila</taxon>
        <taxon>Sophophora</taxon>
    </lineage>
</organism>
<comment type="function">
    <text evidence="4">Probably involved in steroid hormones biosynthesis.</text>
</comment>
<comment type="cofactor">
    <cofactor evidence="1">
        <name>heme</name>
        <dbReference type="ChEBI" id="CHEBI:30413"/>
    </cofactor>
</comment>
<comment type="subcellular location">
    <subcellularLocation>
        <location evidence="5">Endoplasmic reticulum membrane</location>
        <topology evidence="5">Single-pass membrane protein</topology>
    </subcellularLocation>
    <subcellularLocation>
        <location evidence="5">Microsome membrane</location>
        <topology evidence="5">Single-pass membrane protein</topology>
    </subcellularLocation>
</comment>
<comment type="tissue specificity">
    <text evidence="4">Expressed in body wall (epidermal and muscle cells) and mid- and hind-gut.</text>
</comment>
<comment type="developmental stage">
    <text>Low levels throughout postembryonic development.</text>
</comment>
<comment type="induction">
    <text evidence="4">By 20-hydroxyecdysone during the three larval stages, at pupariation and in pupae.</text>
</comment>
<comment type="similarity">
    <text evidence="5">Belongs to the cytochrome P450 family.</text>
</comment>
<name>CP18A_DROME</name>
<keyword id="KW-0217">Developmental protein</keyword>
<keyword id="KW-0256">Endoplasmic reticulum</keyword>
<keyword id="KW-0349">Heme</keyword>
<keyword id="KW-0408">Iron</keyword>
<keyword id="KW-0472">Membrane</keyword>
<keyword id="KW-0479">Metal-binding</keyword>
<keyword id="KW-0492">Microsome</keyword>
<keyword id="KW-0503">Monooxygenase</keyword>
<keyword id="KW-0560">Oxidoreductase</keyword>
<keyword id="KW-1185">Reference proteome</keyword>
<keyword id="KW-0812">Transmembrane</keyword>
<keyword id="KW-1133">Transmembrane helix</keyword>
<evidence type="ECO:0000250" key="1"/>
<evidence type="ECO:0000255" key="2"/>
<evidence type="ECO:0000269" key="3">
    <source>
    </source>
</evidence>
<evidence type="ECO:0000269" key="4">
    <source>
    </source>
</evidence>
<evidence type="ECO:0000305" key="5"/>
<protein>
    <recommendedName>
        <fullName>Cytochrome P450 18a1</fullName>
        <ecNumber>1.14.-.-</ecNumber>
    </recommendedName>
    <alternativeName>
        <fullName>CYPXVIIIA1</fullName>
    </alternativeName>
</protein>
<gene>
    <name type="primary">Cyp18a1</name>
    <name type="synonym">CYP18</name>
    <name type="synonym">Eig17-1</name>
    <name type="ORF">CG6816</name>
</gene>
<proteinExistence type="evidence at transcript level"/>
<accession>Q95078</accession>
<accession>A5AC86</accession>
<accession>A5AC96</accession>
<accession>Q0KHQ8</accession>
<accession>Q27767</accession>
<accession>Q9VWR4</accession>